<feature type="chain" id="PRO_1000011366" description="3-methyl-2-oxobutanoate hydroxymethyltransferase">
    <location>
        <begin position="1"/>
        <end position="271"/>
    </location>
</feature>
<feature type="active site" description="Proton acceptor" evidence="1">
    <location>
        <position position="189"/>
    </location>
</feature>
<feature type="binding site" evidence="1">
    <location>
        <begin position="53"/>
        <end position="54"/>
    </location>
    <ligand>
        <name>3-methyl-2-oxobutanoate</name>
        <dbReference type="ChEBI" id="CHEBI:11851"/>
    </ligand>
</feature>
<feature type="binding site" evidence="1">
    <location>
        <position position="53"/>
    </location>
    <ligand>
        <name>Mg(2+)</name>
        <dbReference type="ChEBI" id="CHEBI:18420"/>
    </ligand>
</feature>
<feature type="binding site" evidence="1">
    <location>
        <position position="92"/>
    </location>
    <ligand>
        <name>3-methyl-2-oxobutanoate</name>
        <dbReference type="ChEBI" id="CHEBI:11851"/>
    </ligand>
</feature>
<feature type="binding site" evidence="1">
    <location>
        <position position="92"/>
    </location>
    <ligand>
        <name>Mg(2+)</name>
        <dbReference type="ChEBI" id="CHEBI:18420"/>
    </ligand>
</feature>
<feature type="binding site" evidence="1">
    <location>
        <position position="120"/>
    </location>
    <ligand>
        <name>3-methyl-2-oxobutanoate</name>
        <dbReference type="ChEBI" id="CHEBI:11851"/>
    </ligand>
</feature>
<feature type="binding site" evidence="1">
    <location>
        <position position="122"/>
    </location>
    <ligand>
        <name>Mg(2+)</name>
        <dbReference type="ChEBI" id="CHEBI:18420"/>
    </ligand>
</feature>
<gene>
    <name evidence="1" type="primary">panB</name>
    <name type="ordered locus">BURPS668_3274</name>
</gene>
<protein>
    <recommendedName>
        <fullName evidence="1">3-methyl-2-oxobutanoate hydroxymethyltransferase</fullName>
        <ecNumber evidence="1">2.1.2.11</ecNumber>
    </recommendedName>
    <alternativeName>
        <fullName evidence="1">Ketopantoate hydroxymethyltransferase</fullName>
        <shortName evidence="1">KPHMT</shortName>
    </alternativeName>
</protein>
<accession>A3ND64</accession>
<reference key="1">
    <citation type="journal article" date="2010" name="Genome Biol. Evol.">
        <title>Continuing evolution of Burkholderia mallei through genome reduction and large-scale rearrangements.</title>
        <authorList>
            <person name="Losada L."/>
            <person name="Ronning C.M."/>
            <person name="DeShazer D."/>
            <person name="Woods D."/>
            <person name="Fedorova N."/>
            <person name="Kim H.S."/>
            <person name="Shabalina S.A."/>
            <person name="Pearson T.R."/>
            <person name="Brinkac L."/>
            <person name="Tan P."/>
            <person name="Nandi T."/>
            <person name="Crabtree J."/>
            <person name="Badger J."/>
            <person name="Beckstrom-Sternberg S."/>
            <person name="Saqib M."/>
            <person name="Schutzer S.E."/>
            <person name="Keim P."/>
            <person name="Nierman W.C."/>
        </authorList>
    </citation>
    <scope>NUCLEOTIDE SEQUENCE [LARGE SCALE GENOMIC DNA]</scope>
    <source>
        <strain>668</strain>
    </source>
</reference>
<organism>
    <name type="scientific">Burkholderia pseudomallei (strain 668)</name>
    <dbReference type="NCBI Taxonomy" id="320373"/>
    <lineage>
        <taxon>Bacteria</taxon>
        <taxon>Pseudomonadati</taxon>
        <taxon>Pseudomonadota</taxon>
        <taxon>Betaproteobacteria</taxon>
        <taxon>Burkholderiales</taxon>
        <taxon>Burkholderiaceae</taxon>
        <taxon>Burkholderia</taxon>
        <taxon>pseudomallei group</taxon>
    </lineage>
</organism>
<sequence>MTYLQESSRPAVTVPKLQAMREAGEKIAMLTSYDASFAALLDRANVDVQLIGDSLGNVLQGQATTLPVTLDDIAYHTACVARAQPRGLVVADLPFGTYGTPADAFASAVKLMRAGAQMVKLEGGEWLAETVRFLVERAVPVCAHVGLTPQSVHAFGGFKVQGKTEAGAAQLLRDARAVEEAGAQLIVLEAVPTLVAAEVTRELSIPTIGIGAGAECSGQVLVLHDMLGVFPGKRPRFVKDFMQGQPSIFAAVEAYVRAVKDGSFPGPEHSF</sequence>
<evidence type="ECO:0000255" key="1">
    <source>
        <dbReference type="HAMAP-Rule" id="MF_00156"/>
    </source>
</evidence>
<name>PANB_BURP6</name>
<dbReference type="EC" id="2.1.2.11" evidence="1"/>
<dbReference type="EMBL" id="CP000570">
    <property type="protein sequence ID" value="ABN84913.1"/>
    <property type="molecule type" value="Genomic_DNA"/>
</dbReference>
<dbReference type="RefSeq" id="WP_004194137.1">
    <property type="nucleotide sequence ID" value="NC_009074.1"/>
</dbReference>
<dbReference type="SMR" id="A3ND64"/>
<dbReference type="GeneID" id="93061412"/>
<dbReference type="KEGG" id="bpd:BURPS668_3274"/>
<dbReference type="HOGENOM" id="CLU_036645_1_0_4"/>
<dbReference type="UniPathway" id="UPA00028">
    <property type="reaction ID" value="UER00003"/>
</dbReference>
<dbReference type="GO" id="GO:0005737">
    <property type="term" value="C:cytoplasm"/>
    <property type="evidence" value="ECO:0007669"/>
    <property type="project" value="UniProtKB-SubCell"/>
</dbReference>
<dbReference type="GO" id="GO:0003864">
    <property type="term" value="F:3-methyl-2-oxobutanoate hydroxymethyltransferase activity"/>
    <property type="evidence" value="ECO:0007669"/>
    <property type="project" value="UniProtKB-UniRule"/>
</dbReference>
<dbReference type="GO" id="GO:0000287">
    <property type="term" value="F:magnesium ion binding"/>
    <property type="evidence" value="ECO:0007669"/>
    <property type="project" value="TreeGrafter"/>
</dbReference>
<dbReference type="GO" id="GO:0015940">
    <property type="term" value="P:pantothenate biosynthetic process"/>
    <property type="evidence" value="ECO:0007669"/>
    <property type="project" value="UniProtKB-UniRule"/>
</dbReference>
<dbReference type="CDD" id="cd06557">
    <property type="entry name" value="KPHMT-like"/>
    <property type="match status" value="1"/>
</dbReference>
<dbReference type="FunFam" id="3.20.20.60:FF:000003">
    <property type="entry name" value="3-methyl-2-oxobutanoate hydroxymethyltransferase"/>
    <property type="match status" value="1"/>
</dbReference>
<dbReference type="Gene3D" id="3.20.20.60">
    <property type="entry name" value="Phosphoenolpyruvate-binding domains"/>
    <property type="match status" value="1"/>
</dbReference>
<dbReference type="HAMAP" id="MF_00156">
    <property type="entry name" value="PanB"/>
    <property type="match status" value="1"/>
</dbReference>
<dbReference type="InterPro" id="IPR003700">
    <property type="entry name" value="Pantoate_hydroxy_MeTrfase"/>
</dbReference>
<dbReference type="InterPro" id="IPR015813">
    <property type="entry name" value="Pyrv/PenolPyrv_kinase-like_dom"/>
</dbReference>
<dbReference type="InterPro" id="IPR040442">
    <property type="entry name" value="Pyrv_kinase-like_dom_sf"/>
</dbReference>
<dbReference type="NCBIfam" id="TIGR00222">
    <property type="entry name" value="panB"/>
    <property type="match status" value="1"/>
</dbReference>
<dbReference type="NCBIfam" id="NF001452">
    <property type="entry name" value="PRK00311.1"/>
    <property type="match status" value="1"/>
</dbReference>
<dbReference type="PANTHER" id="PTHR20881">
    <property type="entry name" value="3-METHYL-2-OXOBUTANOATE HYDROXYMETHYLTRANSFERASE"/>
    <property type="match status" value="1"/>
</dbReference>
<dbReference type="PANTHER" id="PTHR20881:SF0">
    <property type="entry name" value="3-METHYL-2-OXOBUTANOATE HYDROXYMETHYLTRANSFERASE"/>
    <property type="match status" value="1"/>
</dbReference>
<dbReference type="Pfam" id="PF02548">
    <property type="entry name" value="Pantoate_transf"/>
    <property type="match status" value="1"/>
</dbReference>
<dbReference type="PIRSF" id="PIRSF000388">
    <property type="entry name" value="Pantoate_hydroxy_MeTrfase"/>
    <property type="match status" value="1"/>
</dbReference>
<dbReference type="SUPFAM" id="SSF51621">
    <property type="entry name" value="Phosphoenolpyruvate/pyruvate domain"/>
    <property type="match status" value="1"/>
</dbReference>
<comment type="function">
    <text evidence="1">Catalyzes the reversible reaction in which hydroxymethyl group from 5,10-methylenetetrahydrofolate is transferred onto alpha-ketoisovalerate to form ketopantoate.</text>
</comment>
<comment type="catalytic activity">
    <reaction evidence="1">
        <text>3-methyl-2-oxobutanoate + (6R)-5,10-methylene-5,6,7,8-tetrahydrofolate + H2O = 2-dehydropantoate + (6S)-5,6,7,8-tetrahydrofolate</text>
        <dbReference type="Rhea" id="RHEA:11824"/>
        <dbReference type="ChEBI" id="CHEBI:11561"/>
        <dbReference type="ChEBI" id="CHEBI:11851"/>
        <dbReference type="ChEBI" id="CHEBI:15377"/>
        <dbReference type="ChEBI" id="CHEBI:15636"/>
        <dbReference type="ChEBI" id="CHEBI:57453"/>
        <dbReference type="EC" id="2.1.2.11"/>
    </reaction>
</comment>
<comment type="cofactor">
    <cofactor evidence="1">
        <name>Mg(2+)</name>
        <dbReference type="ChEBI" id="CHEBI:18420"/>
    </cofactor>
    <text evidence="1">Binds 1 Mg(2+) ion per subunit.</text>
</comment>
<comment type="pathway">
    <text evidence="1">Cofactor biosynthesis; (R)-pantothenate biosynthesis; (R)-pantoate from 3-methyl-2-oxobutanoate: step 1/2.</text>
</comment>
<comment type="subunit">
    <text evidence="1">Homodecamer; pentamer of dimers.</text>
</comment>
<comment type="subcellular location">
    <subcellularLocation>
        <location evidence="1">Cytoplasm</location>
    </subcellularLocation>
</comment>
<comment type="similarity">
    <text evidence="1">Belongs to the PanB family.</text>
</comment>
<proteinExistence type="inferred from homology"/>
<keyword id="KW-0963">Cytoplasm</keyword>
<keyword id="KW-0460">Magnesium</keyword>
<keyword id="KW-0479">Metal-binding</keyword>
<keyword id="KW-0566">Pantothenate biosynthesis</keyword>
<keyword id="KW-0808">Transferase</keyword>